<dbReference type="EC" id="3.1.3.18" evidence="1"/>
<dbReference type="EMBL" id="AM774415">
    <property type="protein sequence ID" value="CAP13468.1"/>
    <property type="molecule type" value="Genomic_DNA"/>
</dbReference>
<dbReference type="RefSeq" id="WP_010902495.1">
    <property type="nucleotide sequence ID" value="NC_010364.1"/>
</dbReference>
<dbReference type="SMR" id="B0R403"/>
<dbReference type="EnsemblBacteria" id="CAP13468">
    <property type="protein sequence ID" value="CAP13468"/>
    <property type="gene ID" value="OE_2060R"/>
</dbReference>
<dbReference type="KEGG" id="hsl:OE_2060R"/>
<dbReference type="HOGENOM" id="CLU_044146_2_0_2"/>
<dbReference type="PhylomeDB" id="B0R403"/>
<dbReference type="Proteomes" id="UP000001321">
    <property type="component" value="Chromosome"/>
</dbReference>
<dbReference type="GO" id="GO:0005829">
    <property type="term" value="C:cytosol"/>
    <property type="evidence" value="ECO:0007669"/>
    <property type="project" value="TreeGrafter"/>
</dbReference>
<dbReference type="GO" id="GO:0000287">
    <property type="term" value="F:magnesium ion binding"/>
    <property type="evidence" value="ECO:0007669"/>
    <property type="project" value="InterPro"/>
</dbReference>
<dbReference type="GO" id="GO:0008967">
    <property type="term" value="F:phosphoglycolate phosphatase activity"/>
    <property type="evidence" value="ECO:0007669"/>
    <property type="project" value="UniProtKB-UniRule"/>
</dbReference>
<dbReference type="CDD" id="cd07514">
    <property type="entry name" value="HAD_Pase"/>
    <property type="match status" value="1"/>
</dbReference>
<dbReference type="Gene3D" id="3.90.1070.10">
    <property type="match status" value="1"/>
</dbReference>
<dbReference type="Gene3D" id="3.40.50.1000">
    <property type="entry name" value="HAD superfamily/HAD-like"/>
    <property type="match status" value="1"/>
</dbReference>
<dbReference type="HAMAP" id="MF_01419">
    <property type="entry name" value="GPH_hydrolase_arch"/>
    <property type="match status" value="1"/>
</dbReference>
<dbReference type="InterPro" id="IPR036412">
    <property type="entry name" value="HAD-like_sf"/>
</dbReference>
<dbReference type="InterPro" id="IPR006379">
    <property type="entry name" value="HAD-SF_hydro_IIB"/>
</dbReference>
<dbReference type="InterPro" id="IPR023214">
    <property type="entry name" value="HAD_sf"/>
</dbReference>
<dbReference type="InterPro" id="IPR006382">
    <property type="entry name" value="PGPase"/>
</dbReference>
<dbReference type="NCBIfam" id="TIGR01484">
    <property type="entry name" value="HAD-SF-IIB"/>
    <property type="match status" value="1"/>
</dbReference>
<dbReference type="NCBIfam" id="TIGR01487">
    <property type="entry name" value="Pglycolate_arch"/>
    <property type="match status" value="1"/>
</dbReference>
<dbReference type="PANTHER" id="PTHR10000:SF8">
    <property type="entry name" value="HAD SUPERFAMILY HYDROLASE-LIKE, TYPE 3"/>
    <property type="match status" value="1"/>
</dbReference>
<dbReference type="PANTHER" id="PTHR10000">
    <property type="entry name" value="PHOSPHOSERINE PHOSPHATASE"/>
    <property type="match status" value="1"/>
</dbReference>
<dbReference type="Pfam" id="PF08282">
    <property type="entry name" value="Hydrolase_3"/>
    <property type="match status" value="2"/>
</dbReference>
<dbReference type="SUPFAM" id="SSF56784">
    <property type="entry name" value="HAD-like"/>
    <property type="match status" value="1"/>
</dbReference>
<reference key="1">
    <citation type="journal article" date="2008" name="Genomics">
        <title>Evolution in the laboratory: the genome of Halobacterium salinarum strain R1 compared to that of strain NRC-1.</title>
        <authorList>
            <person name="Pfeiffer F."/>
            <person name="Schuster S.C."/>
            <person name="Broicher A."/>
            <person name="Falb M."/>
            <person name="Palm P."/>
            <person name="Rodewald K."/>
            <person name="Ruepp A."/>
            <person name="Soppa J."/>
            <person name="Tittor J."/>
            <person name="Oesterhelt D."/>
        </authorList>
    </citation>
    <scope>NUCLEOTIDE SEQUENCE [LARGE SCALE GENOMIC DNA]</scope>
    <source>
        <strain>ATCC 29341 / DSM 671 / R1</strain>
    </source>
</reference>
<accession>B0R403</accession>
<feature type="chain" id="PRO_1000145628" description="Phosphoglycolate phosphatase">
    <location>
        <begin position="1"/>
        <end position="225"/>
    </location>
</feature>
<feature type="active site" description="Nucleophile" evidence="1">
    <location>
        <position position="11"/>
    </location>
</feature>
<feature type="binding site" evidence="1">
    <location>
        <position position="11"/>
    </location>
    <ligand>
        <name>Mg(2+)</name>
        <dbReference type="ChEBI" id="CHEBI:18420"/>
    </ligand>
</feature>
<feature type="binding site" evidence="1">
    <location>
        <position position="13"/>
    </location>
    <ligand>
        <name>Mg(2+)</name>
        <dbReference type="ChEBI" id="CHEBI:18420"/>
    </ligand>
</feature>
<feature type="binding site" evidence="1">
    <location>
        <position position="153"/>
    </location>
    <ligand>
        <name>substrate</name>
    </ligand>
</feature>
<feature type="binding site" evidence="1">
    <location>
        <position position="176"/>
    </location>
    <ligand>
        <name>Mg(2+)</name>
        <dbReference type="ChEBI" id="CHEBI:18420"/>
    </ligand>
</feature>
<feature type="binding site" evidence="1">
    <location>
        <position position="180"/>
    </location>
    <ligand>
        <name>Mg(2+)</name>
        <dbReference type="ChEBI" id="CHEBI:18420"/>
    </ligand>
</feature>
<name>PGP_HALS3</name>
<evidence type="ECO:0000255" key="1">
    <source>
        <dbReference type="HAMAP-Rule" id="MF_01419"/>
    </source>
</evidence>
<gene>
    <name type="ordered locus">OE_2060R</name>
</gene>
<keyword id="KW-0119">Carbohydrate metabolism</keyword>
<keyword id="KW-0378">Hydrolase</keyword>
<keyword id="KW-0460">Magnesium</keyword>
<keyword id="KW-0479">Metal-binding</keyword>
<protein>
    <recommendedName>
        <fullName evidence="1">Phosphoglycolate phosphatase</fullName>
        <shortName evidence="1">PGP</shortName>
        <shortName evidence="1">PGPase</shortName>
        <ecNumber evidence="1">3.1.3.18</ecNumber>
    </recommendedName>
</protein>
<comment type="function">
    <text evidence="1">Catalyzes the dephosphorylation of 2-phosphoglycolate.</text>
</comment>
<comment type="catalytic activity">
    <reaction evidence="1">
        <text>2-phosphoglycolate + H2O = glycolate + phosphate</text>
        <dbReference type="Rhea" id="RHEA:14369"/>
        <dbReference type="ChEBI" id="CHEBI:15377"/>
        <dbReference type="ChEBI" id="CHEBI:29805"/>
        <dbReference type="ChEBI" id="CHEBI:43474"/>
        <dbReference type="ChEBI" id="CHEBI:58033"/>
        <dbReference type="EC" id="3.1.3.18"/>
    </reaction>
</comment>
<comment type="cofactor">
    <cofactor evidence="1">
        <name>Mg(2+)</name>
        <dbReference type="ChEBI" id="CHEBI:18420"/>
    </cofactor>
</comment>
<comment type="similarity">
    <text evidence="1">Belongs to the archaeal SPP-like hydrolase family.</text>
</comment>
<sequence>MDTADPPLAVDIDGTLSRADRSIDGRVLDVLRGWDGPVVVATGKALPYAVALCQFAGIDERVIAENGGVAYVGDELLHFGDSRAVEQVAAAFEDAGHDIGWGDADLTNRWRETELAVSREQPLDVLSALAADHGLHVVDTGFAYHVKPESMSKGNALPAVAARLGVTAGDFVAVGDSANDVELFEAVGESYAVGNADDHAKGAAETVLSETHGDGFLAAVDRIRS</sequence>
<organism>
    <name type="scientific">Halobacterium salinarum (strain ATCC 29341 / DSM 671 / R1)</name>
    <dbReference type="NCBI Taxonomy" id="478009"/>
    <lineage>
        <taxon>Archaea</taxon>
        <taxon>Methanobacteriati</taxon>
        <taxon>Methanobacteriota</taxon>
        <taxon>Stenosarchaea group</taxon>
        <taxon>Halobacteria</taxon>
        <taxon>Halobacteriales</taxon>
        <taxon>Halobacteriaceae</taxon>
        <taxon>Halobacterium</taxon>
        <taxon>Halobacterium salinarum NRC-34001</taxon>
    </lineage>
</organism>
<proteinExistence type="inferred from homology"/>